<protein>
    <recommendedName>
        <fullName>Arginine N-succinyltransferase subunit beta</fullName>
        <ecNumber>2.3.1.109</ecNumber>
    </recommendedName>
    <alternativeName>
        <fullName>AOST</fullName>
        <shortName>AST</shortName>
    </alternativeName>
    <alternativeName>
        <fullName>ARUAII</fullName>
    </alternativeName>
</protein>
<comment type="catalytic activity">
    <reaction>
        <text>succinyl-CoA + L-arginine = N(2)-succinyl-L-arginine + CoA + H(+)</text>
        <dbReference type="Rhea" id="RHEA:15185"/>
        <dbReference type="ChEBI" id="CHEBI:15378"/>
        <dbReference type="ChEBI" id="CHEBI:32682"/>
        <dbReference type="ChEBI" id="CHEBI:57287"/>
        <dbReference type="ChEBI" id="CHEBI:57292"/>
        <dbReference type="ChEBI" id="CHEBI:58241"/>
        <dbReference type="EC" id="2.3.1.109"/>
    </reaction>
</comment>
<comment type="pathway">
    <text>Amino-acid degradation; L-arginine degradation via AST pathway; L-glutamate and succinate from L-arginine: step 1/5.</text>
</comment>
<comment type="subunit">
    <text>Heterotetramer of two alpha and two beta subunits.</text>
</comment>
<comment type="similarity">
    <text evidence="1">Belongs to the succinylarginine dihydrolase family.</text>
</comment>
<reference key="1">
    <citation type="journal article" date="1997" name="J. Bacteriol.">
        <title>Cloning and characterization of the aru genes encoding enzymes of the catabolic arginine succinyltransferase pathway in Pseudomonas aeruginosa.</title>
        <authorList>
            <person name="Itoh Y."/>
        </authorList>
    </citation>
    <scope>NUCLEOTIDE SEQUENCE [GENOMIC DNA]</scope>
    <source>
        <strain>ATCC 15692 / DSM 22644 / CIP 104116 / JCM 14847 / LMG 12228 / 1C / PRS 101 / PAO1</strain>
    </source>
</reference>
<reference key="2">
    <citation type="journal article" date="2000" name="Nature">
        <title>Complete genome sequence of Pseudomonas aeruginosa PAO1, an opportunistic pathogen.</title>
        <authorList>
            <person name="Stover C.K."/>
            <person name="Pham X.-Q.T."/>
            <person name="Erwin A.L."/>
            <person name="Mizoguchi S.D."/>
            <person name="Warrener P."/>
            <person name="Hickey M.J."/>
            <person name="Brinkman F.S.L."/>
            <person name="Hufnagle W.O."/>
            <person name="Kowalik D.J."/>
            <person name="Lagrou M."/>
            <person name="Garber R.L."/>
            <person name="Goltry L."/>
            <person name="Tolentino E."/>
            <person name="Westbrock-Wadman S."/>
            <person name="Yuan Y."/>
            <person name="Brody L.L."/>
            <person name="Coulter S.N."/>
            <person name="Folger K.R."/>
            <person name="Kas A."/>
            <person name="Larbig K."/>
            <person name="Lim R.M."/>
            <person name="Smith K.A."/>
            <person name="Spencer D.H."/>
            <person name="Wong G.K.-S."/>
            <person name="Wu Z."/>
            <person name="Paulsen I.T."/>
            <person name="Reizer J."/>
            <person name="Saier M.H. Jr."/>
            <person name="Hancock R.E.W."/>
            <person name="Lory S."/>
            <person name="Olson M.V."/>
        </authorList>
    </citation>
    <scope>NUCLEOTIDE SEQUENCE [LARGE SCALE GENOMIC DNA]</scope>
    <source>
        <strain>ATCC 15692 / DSM 22644 / CIP 104116 / JCM 14847 / LMG 12228 / 1C / PRS 101 / PAO1</strain>
    </source>
</reference>
<reference key="3">
    <citation type="journal article" date="1994" name="Eur. J. Biochem.">
        <title>Purification and properties of a succinyltransferase from Pseudomonas aeruginosa specific for both arginine and ornithine.</title>
        <authorList>
            <person name="Tricot C."/>
            <person name="Vander Wauven C."/>
            <person name="Wattiez R."/>
            <person name="Falmagne P."/>
            <person name="Stalon V."/>
        </authorList>
    </citation>
    <scope>PROTEIN SEQUENCE OF 1-15</scope>
    <source>
        <strain>ATCC 15692 / DSM 22644 / CIP 104116 / JCM 14847 / LMG 12228 / 1C / PRS 101 / PAO1</strain>
    </source>
</reference>
<organism>
    <name type="scientific">Pseudomonas aeruginosa (strain ATCC 15692 / DSM 22644 / CIP 104116 / JCM 14847 / LMG 12228 / 1C / PRS 101 / PAO1)</name>
    <dbReference type="NCBI Taxonomy" id="208964"/>
    <lineage>
        <taxon>Bacteria</taxon>
        <taxon>Pseudomonadati</taxon>
        <taxon>Pseudomonadota</taxon>
        <taxon>Gammaproteobacteria</taxon>
        <taxon>Pseudomonadales</taxon>
        <taxon>Pseudomonadaceae</taxon>
        <taxon>Pseudomonas</taxon>
    </lineage>
</organism>
<proteinExistence type="evidence at protein level"/>
<feature type="chain" id="PRO_0000064717" description="Arginine N-succinyltransferase subunit beta">
    <location>
        <begin position="1"/>
        <end position="340"/>
    </location>
</feature>
<gene>
    <name type="primary">aruG</name>
    <name type="ordered locus">PA0897</name>
</gene>
<keyword id="KW-0012">Acyltransferase</keyword>
<keyword id="KW-0056">Arginine metabolism</keyword>
<keyword id="KW-0903">Direct protein sequencing</keyword>
<keyword id="KW-1185">Reference proteome</keyword>
<keyword id="KW-0808">Transferase</keyword>
<sequence>MIVRPVTSADLPALIELARSTGTGLTTLPANEQRLQHRVSWAEKAFRGEAERGDADYLFVLEDDAGKVVGISAIAGAVGLREPWYNYRVGLTVSASQELNIHREIPTLFLANDLTGNSELCSLFLHADHRSGLNGKLLSRARFLFIAEFRHLFGDKLIAEMRGMSDEEGRSPFWESLGRHFFKMEFSQADYLTGVGNKAFIAELMPKFPLYTCFLSEEARGVIGRVHPNTEPALAMLKAEGFSYQGYVDIFDAGPAIEAETDKIRAIAESQNLVLAVGTPGDDAEPYLIHNRKREDCRITAAPARAAAGTLVVDPLTAKRLRLSAGASVRAVPLSAQKRG</sequence>
<accession>P80358</accession>
<evidence type="ECO:0000305" key="1"/>
<name>ASTG_PSEAE</name>
<dbReference type="EC" id="2.3.1.109"/>
<dbReference type="EMBL" id="AF011922">
    <property type="protein sequence ID" value="AAC46011.1"/>
    <property type="molecule type" value="Genomic_DNA"/>
</dbReference>
<dbReference type="EMBL" id="AE004091">
    <property type="protein sequence ID" value="AAG04286.1"/>
    <property type="molecule type" value="Genomic_DNA"/>
</dbReference>
<dbReference type="PIR" id="B83533">
    <property type="entry name" value="B83533"/>
</dbReference>
<dbReference type="RefSeq" id="NP_249588.1">
    <property type="nucleotide sequence ID" value="NC_002516.2"/>
</dbReference>
<dbReference type="SMR" id="P80358"/>
<dbReference type="FunCoup" id="P80358">
    <property type="interactions" value="35"/>
</dbReference>
<dbReference type="STRING" id="208964.PA0897"/>
<dbReference type="PaxDb" id="208964-PA0897"/>
<dbReference type="GeneID" id="883082"/>
<dbReference type="KEGG" id="pae:PA0897"/>
<dbReference type="PATRIC" id="fig|208964.12.peg.932"/>
<dbReference type="PseudoCAP" id="PA0897"/>
<dbReference type="HOGENOM" id="CLU_057655_0_0_6"/>
<dbReference type="InParanoid" id="P80358"/>
<dbReference type="OrthoDB" id="21121at2"/>
<dbReference type="PhylomeDB" id="P80358"/>
<dbReference type="BioCyc" id="MetaCyc:MONOMER-11525"/>
<dbReference type="BioCyc" id="PAER208964:G1FZ6-913-MONOMER"/>
<dbReference type="BRENDA" id="2.3.1.109">
    <property type="organism ID" value="5087"/>
</dbReference>
<dbReference type="UniPathway" id="UPA00185">
    <property type="reaction ID" value="UER00279"/>
</dbReference>
<dbReference type="Proteomes" id="UP000002438">
    <property type="component" value="Chromosome"/>
</dbReference>
<dbReference type="GO" id="GO:0008791">
    <property type="term" value="F:arginine N-succinyltransferase activity"/>
    <property type="evidence" value="ECO:0007669"/>
    <property type="project" value="UniProtKB-EC"/>
</dbReference>
<dbReference type="GO" id="GO:0009015">
    <property type="term" value="F:N-succinylarginine dihydrolase activity"/>
    <property type="evidence" value="ECO:0000318"/>
    <property type="project" value="GO_Central"/>
</dbReference>
<dbReference type="GO" id="GO:0006527">
    <property type="term" value="P:arginine catabolic process"/>
    <property type="evidence" value="ECO:0000314"/>
    <property type="project" value="PseudoCAP"/>
</dbReference>
<dbReference type="GO" id="GO:0019545">
    <property type="term" value="P:arginine catabolic process to succinate"/>
    <property type="evidence" value="ECO:0007669"/>
    <property type="project" value="UniProtKB-UniPathway"/>
</dbReference>
<dbReference type="Gene3D" id="3.40.630.30">
    <property type="match status" value="1"/>
</dbReference>
<dbReference type="InterPro" id="IPR016181">
    <property type="entry name" value="Acyl_CoA_acyltransferase"/>
</dbReference>
<dbReference type="InterPro" id="IPR007041">
    <property type="entry name" value="Arg_succinylTrfase_AstA/AruG"/>
</dbReference>
<dbReference type="InterPro" id="IPR017650">
    <property type="entry name" value="Arginine_N-succinylTrfase"/>
</dbReference>
<dbReference type="NCBIfam" id="TIGR03243">
    <property type="entry name" value="arg_catab_AOST"/>
    <property type="match status" value="1"/>
</dbReference>
<dbReference type="NCBIfam" id="TIGR03244">
    <property type="entry name" value="arg_catab_AstA"/>
    <property type="match status" value="1"/>
</dbReference>
<dbReference type="PANTHER" id="PTHR30420:SF1">
    <property type="entry name" value="ARGININE N-SUCCINYLTRANSFERASE"/>
    <property type="match status" value="1"/>
</dbReference>
<dbReference type="PANTHER" id="PTHR30420">
    <property type="entry name" value="N-SUCCINYLARGININE DIHYDROLASE"/>
    <property type="match status" value="1"/>
</dbReference>
<dbReference type="Pfam" id="PF04958">
    <property type="entry name" value="AstA"/>
    <property type="match status" value="1"/>
</dbReference>
<dbReference type="SUPFAM" id="SSF55729">
    <property type="entry name" value="Acyl-CoA N-acyltransferases (Nat)"/>
    <property type="match status" value="1"/>
</dbReference>